<name>GSHR_PLAFK</name>
<keyword id="KW-0002">3D-structure</keyword>
<keyword id="KW-0963">Cytoplasm</keyword>
<keyword id="KW-0903">Direct protein sequencing</keyword>
<keyword id="KW-1015">Disulfide bond</keyword>
<keyword id="KW-0274">FAD</keyword>
<keyword id="KW-0285">Flavoprotein</keyword>
<keyword id="KW-0521">NADP</keyword>
<keyword id="KW-0560">Oxidoreductase</keyword>
<keyword id="KW-0676">Redox-active center</keyword>
<proteinExistence type="evidence at protein level"/>
<sequence length="500" mass="56561">MVYDLIVIGGGSGGMAAARRAARHNAKVALVEKSRLGGTCVNVGCVPKKIMFNAASVHDILENSRHYGFDTKFSFNLPLLVERRDKYIQRLNNIYRQNLSKDKVDLYEGTASFLSENRILIKGTKDNNNKDNGPLNEEILEGRNILIAVGNKPVFPPVKGIENTISSDEFFNIKESKKIGIVGSGYIAVELINVIKRLGIDSYIFARGNRILRKFDESVINVLENDMKKNNINIVTFADVVEIKKVSDKNLSIHLSDGRIYEHFDHVIYCVGRSPDTENLKLEKLNVETNNNYIVVDENQRTSVNNIYAVGDCCMVKKSKEIEDLNLLKLYNEERYLNKKENVTEDIFYNVQLTPVAINAGRLLADRLFLKKTRKTNYKLIPTVIFSHPPIGTIGLSEEAAIQIYGKENVKIYESKFTNLFFSVYDIEPELKEKTYLKLVCVGKDELIKGLHIIGLNADEIVQGFAVALKMNATKKDFDETIPIHPTAAEEFLTLQPWMK</sequence>
<accession>Q94655</accession>
<protein>
    <recommendedName>
        <fullName evidence="8">Glutathione reductase</fullName>
        <shortName evidence="9">GRase</shortName>
        <shortName evidence="6">PfGR</shortName>
        <ecNumber evidence="3 4">1.8.1.7</ecNumber>
    </recommendedName>
</protein>
<evidence type="ECO:0000250" key="1">
    <source>
        <dbReference type="UniProtKB" id="O15770"/>
    </source>
</evidence>
<evidence type="ECO:0000250" key="2">
    <source>
        <dbReference type="UniProtKB" id="P00390"/>
    </source>
</evidence>
<evidence type="ECO:0000269" key="3">
    <source>
    </source>
</evidence>
<evidence type="ECO:0000269" key="4">
    <source>
    </source>
</evidence>
<evidence type="ECO:0000269" key="5">
    <source>
    </source>
</evidence>
<evidence type="ECO:0000303" key="6">
    <source>
    </source>
</evidence>
<evidence type="ECO:0000303" key="7">
    <source>
    </source>
</evidence>
<evidence type="ECO:0000303" key="8">
    <source>
    </source>
</evidence>
<evidence type="ECO:0000305" key="9"/>
<evidence type="ECO:0007744" key="10">
    <source>
        <dbReference type="PDB" id="1ONF"/>
    </source>
</evidence>
<evidence type="ECO:0007829" key="11">
    <source>
        <dbReference type="PDB" id="1ONF"/>
    </source>
</evidence>
<gene>
    <name evidence="7" type="primary">GR</name>
    <name evidence="8" type="synonym">GR2</name>
</gene>
<feature type="initiator methionine" description="Removed" evidence="4">
    <location>
        <position position="1"/>
    </location>
</feature>
<feature type="chain" id="PRO_0000067959" description="Glutathione reductase">
    <location>
        <begin position="2"/>
        <end position="500"/>
    </location>
</feature>
<feature type="active site" description="Proton acceptor" evidence="2">
    <location>
        <position position="485"/>
    </location>
</feature>
<feature type="binding site" evidence="3 10">
    <location>
        <position position="12"/>
    </location>
    <ligand>
        <name>FAD</name>
        <dbReference type="ChEBI" id="CHEBI:57692"/>
    </ligand>
</feature>
<feature type="binding site" evidence="2">
    <location>
        <position position="12"/>
    </location>
    <ligand>
        <name>glutathione</name>
        <dbReference type="ChEBI" id="CHEBI:57925"/>
    </ligand>
</feature>
<feature type="binding site" evidence="3 10">
    <location>
        <position position="13"/>
    </location>
    <ligand>
        <name>FAD</name>
        <dbReference type="ChEBI" id="CHEBI:57692"/>
    </ligand>
</feature>
<feature type="binding site" evidence="2">
    <location>
        <position position="19"/>
    </location>
    <ligand>
        <name>glutathione</name>
        <dbReference type="ChEBI" id="CHEBI:57925"/>
    </ligand>
</feature>
<feature type="binding site" evidence="3 10">
    <location>
        <position position="32"/>
    </location>
    <ligand>
        <name>FAD</name>
        <dbReference type="ChEBI" id="CHEBI:57692"/>
    </ligand>
</feature>
<feature type="binding site" evidence="3 10">
    <location>
        <position position="39"/>
    </location>
    <ligand>
        <name>FAD</name>
        <dbReference type="ChEBI" id="CHEBI:57692"/>
    </ligand>
</feature>
<feature type="binding site" evidence="3 10">
    <location>
        <position position="40"/>
    </location>
    <ligand>
        <name>FAD</name>
        <dbReference type="ChEBI" id="CHEBI:57692"/>
    </ligand>
</feature>
<feature type="binding site" evidence="3 10">
    <location>
        <position position="48"/>
    </location>
    <ligand>
        <name>FAD</name>
        <dbReference type="ChEBI" id="CHEBI:57692"/>
    </ligand>
</feature>
<feature type="binding site" evidence="2">
    <location>
        <position position="95"/>
    </location>
    <ligand>
        <name>glutathione</name>
        <dbReference type="ChEBI" id="CHEBI:57925"/>
    </ligand>
</feature>
<feature type="binding site" evidence="3 10">
    <location>
        <position position="111"/>
    </location>
    <ligand>
        <name>FAD</name>
        <dbReference type="ChEBI" id="CHEBI:57692"/>
    </ligand>
</feature>
<feature type="binding site" evidence="2">
    <location>
        <position position="187"/>
    </location>
    <ligand>
        <name>NADP(+)</name>
        <dbReference type="ChEBI" id="CHEBI:58349"/>
    </ligand>
</feature>
<feature type="binding site" evidence="2">
    <location>
        <position position="190"/>
    </location>
    <ligand>
        <name>NADP(+)</name>
        <dbReference type="ChEBI" id="CHEBI:58349"/>
    </ligand>
</feature>
<feature type="binding site" evidence="2">
    <location>
        <position position="207"/>
    </location>
    <ligand>
        <name>NADP(+)</name>
        <dbReference type="ChEBI" id="CHEBI:58349"/>
    </ligand>
</feature>
<feature type="binding site" evidence="2">
    <location>
        <position position="213"/>
    </location>
    <ligand>
        <name>NADP(+)</name>
        <dbReference type="ChEBI" id="CHEBI:58349"/>
    </ligand>
</feature>
<feature type="binding site" evidence="2">
    <location>
        <position position="272"/>
    </location>
    <ligand>
        <name>NADP(+)</name>
        <dbReference type="ChEBI" id="CHEBI:58349"/>
    </ligand>
</feature>
<feature type="binding site" evidence="3 10">
    <location>
        <position position="312"/>
    </location>
    <ligand>
        <name>FAD</name>
        <dbReference type="ChEBI" id="CHEBI:57692"/>
    </ligand>
</feature>
<feature type="binding site" evidence="3 10">
    <location>
        <position position="354"/>
    </location>
    <ligand>
        <name>FAD</name>
        <dbReference type="ChEBI" id="CHEBI:57692"/>
    </ligand>
</feature>
<feature type="binding site" evidence="2">
    <location>
        <position position="362"/>
    </location>
    <ligand>
        <name>glutathione</name>
        <dbReference type="ChEBI" id="CHEBI:57925"/>
    </ligand>
</feature>
<feature type="binding site" evidence="2">
    <location>
        <position position="384"/>
    </location>
    <ligand>
        <name>NADP(+)</name>
        <dbReference type="ChEBI" id="CHEBI:58349"/>
    </ligand>
</feature>
<feature type="binding site" evidence="3 10">
    <location>
        <position position="485"/>
    </location>
    <ligand>
        <name>FAD</name>
        <dbReference type="ChEBI" id="CHEBI:57692"/>
    </ligand>
</feature>
<feature type="disulfide bond" description="Redox-active" evidence="3 10">
    <location>
        <begin position="40"/>
        <end position="45"/>
    </location>
</feature>
<feature type="strand" evidence="11">
    <location>
        <begin position="3"/>
        <end position="8"/>
    </location>
</feature>
<feature type="helix" evidence="11">
    <location>
        <begin position="12"/>
        <end position="23"/>
    </location>
</feature>
<feature type="strand" evidence="11">
    <location>
        <begin position="28"/>
        <end position="35"/>
    </location>
</feature>
<feature type="helix" evidence="11">
    <location>
        <begin position="38"/>
        <end position="42"/>
    </location>
</feature>
<feature type="helix" evidence="11">
    <location>
        <begin position="45"/>
        <end position="63"/>
    </location>
</feature>
<feature type="helix" evidence="11">
    <location>
        <begin position="64"/>
        <end position="67"/>
    </location>
</feature>
<feature type="helix" evidence="11">
    <location>
        <begin position="77"/>
        <end position="101"/>
    </location>
</feature>
<feature type="strand" evidence="11">
    <location>
        <begin position="105"/>
        <end position="109"/>
    </location>
</feature>
<feature type="strand" evidence="11">
    <location>
        <begin position="142"/>
        <end position="147"/>
    </location>
</feature>
<feature type="helix" evidence="11">
    <location>
        <begin position="161"/>
        <end position="163"/>
    </location>
</feature>
<feature type="helix" evidence="11">
    <location>
        <begin position="167"/>
        <end position="170"/>
    </location>
</feature>
<feature type="strand" evidence="11">
    <location>
        <begin position="177"/>
        <end position="182"/>
    </location>
</feature>
<feature type="helix" evidence="11">
    <location>
        <begin position="186"/>
        <end position="196"/>
    </location>
</feature>
<feature type="turn" evidence="11">
    <location>
        <begin position="197"/>
        <end position="199"/>
    </location>
</feature>
<feature type="strand" evidence="11">
    <location>
        <begin position="201"/>
        <end position="205"/>
    </location>
</feature>
<feature type="strand" evidence="11">
    <location>
        <begin position="207"/>
        <end position="211"/>
    </location>
</feature>
<feature type="helix" evidence="11">
    <location>
        <begin position="217"/>
        <end position="229"/>
    </location>
</feature>
<feature type="strand" evidence="11">
    <location>
        <begin position="233"/>
        <end position="235"/>
    </location>
</feature>
<feature type="strand" evidence="11">
    <location>
        <begin position="240"/>
        <end position="247"/>
    </location>
</feature>
<feature type="strand" evidence="11">
    <location>
        <begin position="251"/>
        <end position="255"/>
    </location>
</feature>
<feature type="strand" evidence="11">
    <location>
        <begin position="260"/>
        <end position="269"/>
    </location>
</feature>
<feature type="turn" evidence="11">
    <location>
        <begin position="276"/>
        <end position="279"/>
    </location>
</feature>
<feature type="turn" evidence="11">
    <location>
        <begin position="283"/>
        <end position="286"/>
    </location>
</feature>
<feature type="strand" evidence="11">
    <location>
        <begin position="289"/>
        <end position="292"/>
    </location>
</feature>
<feature type="strand" evidence="11">
    <location>
        <begin position="294"/>
        <end position="296"/>
    </location>
</feature>
<feature type="strand" evidence="11">
    <location>
        <begin position="303"/>
        <end position="309"/>
    </location>
</feature>
<feature type="strand" evidence="11">
    <location>
        <begin position="314"/>
        <end position="316"/>
    </location>
</feature>
<feature type="helix" evidence="11">
    <location>
        <begin position="354"/>
        <end position="369"/>
    </location>
</feature>
<feature type="strand" evidence="11">
    <location>
        <begin position="383"/>
        <end position="385"/>
    </location>
</feature>
<feature type="strand" evidence="11">
    <location>
        <begin position="391"/>
        <end position="395"/>
    </location>
</feature>
<feature type="helix" evidence="11">
    <location>
        <begin position="398"/>
        <end position="404"/>
    </location>
</feature>
<feature type="helix" evidence="11">
    <location>
        <begin position="407"/>
        <end position="409"/>
    </location>
</feature>
<feature type="strand" evidence="11">
    <location>
        <begin position="410"/>
        <end position="417"/>
    </location>
</feature>
<feature type="helix" evidence="11">
    <location>
        <begin position="420"/>
        <end position="422"/>
    </location>
</feature>
<feature type="helix" evidence="11">
    <location>
        <begin position="429"/>
        <end position="431"/>
    </location>
</feature>
<feature type="strand" evidence="11">
    <location>
        <begin position="435"/>
        <end position="442"/>
    </location>
</feature>
<feature type="turn" evidence="11">
    <location>
        <begin position="443"/>
        <end position="446"/>
    </location>
</feature>
<feature type="strand" evidence="11">
    <location>
        <begin position="447"/>
        <end position="455"/>
    </location>
</feature>
<feature type="helix" evidence="11">
    <location>
        <begin position="458"/>
        <end position="470"/>
    </location>
</feature>
<feature type="helix" evidence="11">
    <location>
        <begin position="475"/>
        <end position="479"/>
    </location>
</feature>
<feature type="helix" evidence="11">
    <location>
        <begin position="491"/>
        <end position="494"/>
    </location>
</feature>
<reference key="1">
    <citation type="journal article" date="1996" name="Eur. J. Biochem.">
        <title>Molecular cloning and characterization of a putative glutathione reductase gene, the PfGR2 gene, from Plasmodium falciparum.</title>
        <authorList>
            <person name="Faerber P.M."/>
            <person name="Becker K."/>
            <person name="Mueller S."/>
        </authorList>
    </citation>
    <scope>NUCLEOTIDE SEQUENCE [GENOMIC DNA]</scope>
    <scope>DEVELOPMENTAL STAGE</scope>
</reference>
<reference key="2">
    <citation type="journal article" date="1996" name="Eur. J. Biochem.">
        <title>Glutathione reductase and glutamate dehydrogenase of Plasmodium falciparum, the causative agent of tropical malaria.</title>
        <authorList>
            <person name="Krauth-Siegel R.L."/>
            <person name="Muller J.G."/>
            <person name="Lottspeich F."/>
            <person name="Schirmer R.H."/>
        </authorList>
    </citation>
    <scope>PROTEIN SEQUENCE OF 2-16</scope>
    <scope>FUNCTION</scope>
    <scope>CATALYTIC ACTIVITY</scope>
    <scope>COFACTOR</scope>
    <scope>BIOPHYSICOCHEMICAL PROPERTIES</scope>
    <scope>SUBUNIT</scope>
    <scope>DEVELOPMENTAL STAGE</scope>
</reference>
<reference evidence="10" key="3">
    <citation type="journal article" date="2003" name="J. Mol. Biol.">
        <title>Glutathione reductase of the malarial parasite Plasmodium falciparum: crystal structure and inhibitor development.</title>
        <authorList>
            <person name="Sarma G.N."/>
            <person name="Savvides S.N."/>
            <person name="Becker K."/>
            <person name="Schirmer M."/>
            <person name="Schirmer R.H."/>
            <person name="Karplus P.A."/>
        </authorList>
    </citation>
    <scope>X-RAY CRYSTALLOGRAPHY (2.60 ANGSTROMS) IN COMPLEX WITH FAD</scope>
    <scope>FUNCTION</scope>
    <scope>CATALYTIC ACTIVITY</scope>
    <scope>COFACTOR</scope>
    <scope>BIOPHYSICOCHEMICAL PROPERTIES</scope>
    <scope>DISULFIDE BOND</scope>
</reference>
<dbReference type="EC" id="1.8.1.7" evidence="3 4"/>
<dbReference type="EMBL" id="X93462">
    <property type="protein sequence ID" value="CAA63747.1"/>
    <property type="molecule type" value="Genomic_DNA"/>
</dbReference>
<dbReference type="PDB" id="1ONF">
    <property type="method" value="X-ray"/>
    <property type="resolution" value="2.60 A"/>
    <property type="chains" value="A=1-500"/>
</dbReference>
<dbReference type="PDBsum" id="1ONF"/>
<dbReference type="SMR" id="Q94655"/>
<dbReference type="ChEMBL" id="CHEMBL1741261"/>
<dbReference type="DrugBank" id="DB03147">
    <property type="generic name" value="Flavin adenine dinucleotide"/>
</dbReference>
<dbReference type="EvolutionaryTrace" id="Q94655"/>
<dbReference type="GO" id="GO:0005829">
    <property type="term" value="C:cytosol"/>
    <property type="evidence" value="ECO:0007669"/>
    <property type="project" value="TreeGrafter"/>
</dbReference>
<dbReference type="GO" id="GO:0005739">
    <property type="term" value="C:mitochondrion"/>
    <property type="evidence" value="ECO:0007669"/>
    <property type="project" value="TreeGrafter"/>
</dbReference>
<dbReference type="GO" id="GO:0050660">
    <property type="term" value="F:flavin adenine dinucleotide binding"/>
    <property type="evidence" value="ECO:0007669"/>
    <property type="project" value="InterPro"/>
</dbReference>
<dbReference type="GO" id="GO:0004362">
    <property type="term" value="F:glutathione-disulfide reductase (NADPH) activity"/>
    <property type="evidence" value="ECO:0007669"/>
    <property type="project" value="UniProtKB-EC"/>
</dbReference>
<dbReference type="GO" id="GO:0045454">
    <property type="term" value="P:cell redox homeostasis"/>
    <property type="evidence" value="ECO:0007669"/>
    <property type="project" value="InterPro"/>
</dbReference>
<dbReference type="GO" id="GO:0034599">
    <property type="term" value="P:cellular response to oxidative stress"/>
    <property type="evidence" value="ECO:0007669"/>
    <property type="project" value="TreeGrafter"/>
</dbReference>
<dbReference type="GO" id="GO:0006749">
    <property type="term" value="P:glutathione metabolic process"/>
    <property type="evidence" value="ECO:0007669"/>
    <property type="project" value="TreeGrafter"/>
</dbReference>
<dbReference type="FunFam" id="3.30.390.30:FF:000014">
    <property type="entry name" value="Glutathione reductase"/>
    <property type="match status" value="1"/>
</dbReference>
<dbReference type="FunFam" id="3.50.50.60:FF:000277">
    <property type="entry name" value="Glutathione reductase"/>
    <property type="match status" value="1"/>
</dbReference>
<dbReference type="Gene3D" id="3.30.390.30">
    <property type="match status" value="1"/>
</dbReference>
<dbReference type="Gene3D" id="3.50.50.60">
    <property type="entry name" value="FAD/NAD(P)-binding domain"/>
    <property type="match status" value="2"/>
</dbReference>
<dbReference type="InterPro" id="IPR036188">
    <property type="entry name" value="FAD/NAD-bd_sf"/>
</dbReference>
<dbReference type="InterPro" id="IPR023753">
    <property type="entry name" value="FAD/NAD-binding_dom"/>
</dbReference>
<dbReference type="InterPro" id="IPR016156">
    <property type="entry name" value="FAD/NAD-linked_Rdtase_dimer_sf"/>
</dbReference>
<dbReference type="InterPro" id="IPR046952">
    <property type="entry name" value="GSHR/TRXR-like"/>
</dbReference>
<dbReference type="InterPro" id="IPR001100">
    <property type="entry name" value="Pyr_nuc-diS_OxRdtase"/>
</dbReference>
<dbReference type="InterPro" id="IPR004099">
    <property type="entry name" value="Pyr_nucl-diS_OxRdtase_dimer"/>
</dbReference>
<dbReference type="InterPro" id="IPR012999">
    <property type="entry name" value="Pyr_OxRdtase_I_AS"/>
</dbReference>
<dbReference type="PANTHER" id="PTHR42737">
    <property type="entry name" value="GLUTATHIONE REDUCTASE"/>
    <property type="match status" value="1"/>
</dbReference>
<dbReference type="PANTHER" id="PTHR42737:SF2">
    <property type="entry name" value="GLUTATHIONE REDUCTASE"/>
    <property type="match status" value="1"/>
</dbReference>
<dbReference type="Pfam" id="PF07992">
    <property type="entry name" value="Pyr_redox_2"/>
    <property type="match status" value="1"/>
</dbReference>
<dbReference type="Pfam" id="PF02852">
    <property type="entry name" value="Pyr_redox_dim"/>
    <property type="match status" value="1"/>
</dbReference>
<dbReference type="PIRSF" id="PIRSF000350">
    <property type="entry name" value="Mercury_reductase_MerA"/>
    <property type="match status" value="1"/>
</dbReference>
<dbReference type="PRINTS" id="PR00368">
    <property type="entry name" value="FADPNR"/>
</dbReference>
<dbReference type="PRINTS" id="PR00411">
    <property type="entry name" value="PNDRDTASEI"/>
</dbReference>
<dbReference type="SUPFAM" id="SSF51905">
    <property type="entry name" value="FAD/NAD(P)-binding domain"/>
    <property type="match status" value="1"/>
</dbReference>
<dbReference type="SUPFAM" id="SSF55424">
    <property type="entry name" value="FAD/NAD-linked reductases, dimerisation (C-terminal) domain"/>
    <property type="match status" value="1"/>
</dbReference>
<dbReference type="PROSITE" id="PS00076">
    <property type="entry name" value="PYRIDINE_REDOX_1"/>
    <property type="match status" value="1"/>
</dbReference>
<comment type="function">
    <text evidence="3 4">Catalyzes the reduction of glutathione disulfide (GSSG) to reduced glutathione (GSH). Constitutes the major mechanism to maintain a high GSH:GSSG ratio in the cytosol.</text>
</comment>
<comment type="catalytic activity">
    <reaction evidence="3 4">
        <text>2 glutathione + NADP(+) = glutathione disulfide + NADPH + H(+)</text>
        <dbReference type="Rhea" id="RHEA:11740"/>
        <dbReference type="ChEBI" id="CHEBI:15378"/>
        <dbReference type="ChEBI" id="CHEBI:57783"/>
        <dbReference type="ChEBI" id="CHEBI:57925"/>
        <dbReference type="ChEBI" id="CHEBI:58297"/>
        <dbReference type="ChEBI" id="CHEBI:58349"/>
        <dbReference type="EC" id="1.8.1.7"/>
    </reaction>
    <physiologicalReaction direction="right-to-left" evidence="3 4">
        <dbReference type="Rhea" id="RHEA:11742"/>
    </physiologicalReaction>
</comment>
<comment type="cofactor">
    <cofactor evidence="4">
        <name>FAD</name>
        <dbReference type="ChEBI" id="CHEBI:57692"/>
    </cofactor>
    <text evidence="3">Binds 1 FAD per subunit.</text>
</comment>
<comment type="biophysicochemical properties">
    <kinetics>
        <KM evidence="4">4.8 uM for NADPH (at 25 degrees Celsius and pH 6.9)</KM>
        <KM evidence="4">69 uM for glutathione disulfide (GSSG) (at 25 degrees Celsius and pH 6.9)</KM>
        <KM evidence="3">88 uM for glutathione disulfide (GSSG) (at 25 degrees Celsius and pH 6.9)</KM>
        <text evidence="4">kcat is 188.3 sec(-1) with GSSG as substrate (at 25 degrees Celsius and pH 6.9).</text>
    </kinetics>
    <phDependence>
        <text evidence="4">Optimum pH is 6.8.</text>
    </phDependence>
    <temperatureDependence>
        <text evidence="4">Inactive at 80 degrees Celsius.</text>
    </temperatureDependence>
</comment>
<comment type="subunit">
    <text evidence="4">Homodimer.</text>
</comment>
<comment type="subcellular location">
    <subcellularLocation>
        <location evidence="1">Cytoplasm</location>
    </subcellularLocation>
</comment>
<comment type="developmental stage">
    <text evidence="4 5">Expressed during the parasite blood stage, including in schizonts (at protein level) (PubMed:8631352). Expression is weak in ring, early trophozoite and increases in the late trophozoite and early schizont stage (PubMed:8774709).</text>
</comment>
<comment type="miscellaneous">
    <text evidence="9">There are 2 isoforms resulting from alternative translation initiation. The displayed sequence is likely to represent the shorter isoform.</text>
</comment>
<comment type="miscellaneous">
    <text evidence="3">The active site is a redox-active disulfide bond.</text>
</comment>
<comment type="similarity">
    <text evidence="9">Belongs to the class-I pyridine nucleotide-disulfide oxidoreductase family.</text>
</comment>
<organism>
    <name type="scientific">Plasmodium falciparum (isolate K1 / Thailand)</name>
    <dbReference type="NCBI Taxonomy" id="5839"/>
    <lineage>
        <taxon>Eukaryota</taxon>
        <taxon>Sar</taxon>
        <taxon>Alveolata</taxon>
        <taxon>Apicomplexa</taxon>
        <taxon>Aconoidasida</taxon>
        <taxon>Haemosporida</taxon>
        <taxon>Plasmodiidae</taxon>
        <taxon>Plasmodium</taxon>
        <taxon>Plasmodium (Laverania)</taxon>
    </lineage>
</organism>